<comment type="subunit">
    <text evidence="1">Part of the 50S ribosomal subunit.</text>
</comment>
<comment type="similarity">
    <text evidence="1">Belongs to the universal ribosomal protein uL30 family.</text>
</comment>
<protein>
    <recommendedName>
        <fullName evidence="1">Large ribosomal subunit protein uL30</fullName>
    </recommendedName>
    <alternativeName>
        <fullName evidence="2">50S ribosomal protein L30</fullName>
    </alternativeName>
</protein>
<organism>
    <name type="scientific">Bradyrhizobium sp. (strain ORS 278)</name>
    <dbReference type="NCBI Taxonomy" id="114615"/>
    <lineage>
        <taxon>Bacteria</taxon>
        <taxon>Pseudomonadati</taxon>
        <taxon>Pseudomonadota</taxon>
        <taxon>Alphaproteobacteria</taxon>
        <taxon>Hyphomicrobiales</taxon>
        <taxon>Nitrobacteraceae</taxon>
        <taxon>Bradyrhizobium</taxon>
    </lineage>
</organism>
<name>RL30_BRASO</name>
<dbReference type="EMBL" id="CU234118">
    <property type="protein sequence ID" value="CAL76886.1"/>
    <property type="molecule type" value="Genomic_DNA"/>
</dbReference>
<dbReference type="RefSeq" id="WP_011926056.1">
    <property type="nucleotide sequence ID" value="NC_009445.1"/>
</dbReference>
<dbReference type="SMR" id="A4YSL0"/>
<dbReference type="STRING" id="114615.BRADO3084"/>
<dbReference type="KEGG" id="bra:BRADO3084"/>
<dbReference type="eggNOG" id="COG1841">
    <property type="taxonomic scope" value="Bacteria"/>
</dbReference>
<dbReference type="HOGENOM" id="CLU_131047_1_2_5"/>
<dbReference type="OrthoDB" id="9812790at2"/>
<dbReference type="Proteomes" id="UP000001994">
    <property type="component" value="Chromosome"/>
</dbReference>
<dbReference type="GO" id="GO:0022625">
    <property type="term" value="C:cytosolic large ribosomal subunit"/>
    <property type="evidence" value="ECO:0007669"/>
    <property type="project" value="TreeGrafter"/>
</dbReference>
<dbReference type="GO" id="GO:0003735">
    <property type="term" value="F:structural constituent of ribosome"/>
    <property type="evidence" value="ECO:0007669"/>
    <property type="project" value="InterPro"/>
</dbReference>
<dbReference type="GO" id="GO:0006412">
    <property type="term" value="P:translation"/>
    <property type="evidence" value="ECO:0007669"/>
    <property type="project" value="UniProtKB-UniRule"/>
</dbReference>
<dbReference type="CDD" id="cd01658">
    <property type="entry name" value="Ribosomal_L30"/>
    <property type="match status" value="1"/>
</dbReference>
<dbReference type="Gene3D" id="3.30.1390.20">
    <property type="entry name" value="Ribosomal protein L30, ferredoxin-like fold domain"/>
    <property type="match status" value="1"/>
</dbReference>
<dbReference type="HAMAP" id="MF_01371_B">
    <property type="entry name" value="Ribosomal_uL30_B"/>
    <property type="match status" value="1"/>
</dbReference>
<dbReference type="InterPro" id="IPR036919">
    <property type="entry name" value="Ribo_uL30_ferredoxin-like_sf"/>
</dbReference>
<dbReference type="InterPro" id="IPR005996">
    <property type="entry name" value="Ribosomal_uL30_bac-type"/>
</dbReference>
<dbReference type="InterPro" id="IPR016082">
    <property type="entry name" value="Ribosomal_uL30_ferredoxin-like"/>
</dbReference>
<dbReference type="NCBIfam" id="TIGR01308">
    <property type="entry name" value="rpmD_bact"/>
    <property type="match status" value="1"/>
</dbReference>
<dbReference type="PANTHER" id="PTHR15892:SF2">
    <property type="entry name" value="LARGE RIBOSOMAL SUBUNIT PROTEIN UL30M"/>
    <property type="match status" value="1"/>
</dbReference>
<dbReference type="PANTHER" id="PTHR15892">
    <property type="entry name" value="MITOCHONDRIAL RIBOSOMAL PROTEIN L30"/>
    <property type="match status" value="1"/>
</dbReference>
<dbReference type="Pfam" id="PF00327">
    <property type="entry name" value="Ribosomal_L30"/>
    <property type="match status" value="1"/>
</dbReference>
<dbReference type="PIRSF" id="PIRSF002211">
    <property type="entry name" value="Ribosomal_L30_bac-type"/>
    <property type="match status" value="1"/>
</dbReference>
<dbReference type="SUPFAM" id="SSF55129">
    <property type="entry name" value="Ribosomal protein L30p/L7e"/>
    <property type="match status" value="1"/>
</dbReference>
<accession>A4YSL0</accession>
<feature type="chain" id="PRO_0000347081" description="Large ribosomal subunit protein uL30">
    <location>
        <begin position="1"/>
        <end position="63"/>
    </location>
</feature>
<reference key="1">
    <citation type="journal article" date="2007" name="Science">
        <title>Legumes symbioses: absence of nod genes in photosynthetic bradyrhizobia.</title>
        <authorList>
            <person name="Giraud E."/>
            <person name="Moulin L."/>
            <person name="Vallenet D."/>
            <person name="Barbe V."/>
            <person name="Cytryn E."/>
            <person name="Avarre J.-C."/>
            <person name="Jaubert M."/>
            <person name="Simon D."/>
            <person name="Cartieaux F."/>
            <person name="Prin Y."/>
            <person name="Bena G."/>
            <person name="Hannibal L."/>
            <person name="Fardoux J."/>
            <person name="Kojadinovic M."/>
            <person name="Vuillet L."/>
            <person name="Lajus A."/>
            <person name="Cruveiller S."/>
            <person name="Rouy Z."/>
            <person name="Mangenot S."/>
            <person name="Segurens B."/>
            <person name="Dossat C."/>
            <person name="Franck W.L."/>
            <person name="Chang W.-S."/>
            <person name="Saunders E."/>
            <person name="Bruce D."/>
            <person name="Richardson P."/>
            <person name="Normand P."/>
            <person name="Dreyfus B."/>
            <person name="Pignol D."/>
            <person name="Stacey G."/>
            <person name="Emerich D."/>
            <person name="Vermeglio A."/>
            <person name="Medigue C."/>
            <person name="Sadowsky M."/>
        </authorList>
    </citation>
    <scope>NUCLEOTIDE SEQUENCE [LARGE SCALE GENOMIC DNA]</scope>
    <source>
        <strain>ORS 278</strain>
    </source>
</reference>
<keyword id="KW-1185">Reference proteome</keyword>
<keyword id="KW-0687">Ribonucleoprotein</keyword>
<keyword id="KW-0689">Ribosomal protein</keyword>
<evidence type="ECO:0000255" key="1">
    <source>
        <dbReference type="HAMAP-Rule" id="MF_01371"/>
    </source>
</evidence>
<evidence type="ECO:0000305" key="2"/>
<gene>
    <name evidence="1" type="primary">rpmD</name>
    <name type="ordered locus">BRADO3084</name>
</gene>
<proteinExistence type="inferred from homology"/>
<sequence length="63" mass="7123">MADAKTIKIEQIGSPIRRHRSQRSTLIGLKLNKIGRVTELPDTPAVRGMITKVHHLVRIVDEK</sequence>